<reference evidence="16" key="1">
    <citation type="journal article" date="2000" name="Neuron">
        <title>Olfaction and odor discrimination are mediated by the C. elegans guanylyl cyclase ODR-1.</title>
        <authorList>
            <person name="L'Etoile N.D."/>
            <person name="Bargmann C.I."/>
        </authorList>
    </citation>
    <scope>NUCLEOTIDE SEQUENCE [MRNA] (ISOFORM B)</scope>
    <scope>FUNCTION</scope>
    <scope>SUBCELLULAR LOCATION</scope>
    <scope>TISSUE SPECIFICITY</scope>
    <scope>DOMAIN</scope>
    <scope>MUTAGENESIS OF GLU-904</scope>
</reference>
<reference evidence="17" key="2">
    <citation type="journal article" date="1998" name="Science">
        <title>Genome sequence of the nematode C. elegans: a platform for investigating biology.</title>
        <authorList>
            <consortium name="The C. elegans sequencing consortium"/>
        </authorList>
    </citation>
    <scope>NUCLEOTIDE SEQUENCE [LARGE SCALE GENOMIC DNA]</scope>
    <source>
        <strain evidence="17">Bristol N2</strain>
    </source>
</reference>
<reference evidence="15" key="3">
    <citation type="journal article" date="1993" name="Cell">
        <title>Odorant-selective genes and neurons mediate olfaction in C. elegans.</title>
        <authorList>
            <person name="Bargmann C.I."/>
            <person name="Hartwieg E."/>
            <person name="Horvitz H.R."/>
        </authorList>
    </citation>
    <scope>FUNCTION</scope>
    <scope>MUTAGENESIS OF GLY-647</scope>
</reference>
<reference evidence="15" key="4">
    <citation type="journal article" date="1997" name="Proc. Natl. Acad. Sci. U.S.A.">
        <title>Guanylyl cyclase expression in specific sensory neurons: a new family of chemosensory receptors.</title>
        <authorList>
            <person name="Yu S."/>
            <person name="Avery L."/>
            <person name="Baude E."/>
            <person name="Garbers D.L."/>
        </authorList>
    </citation>
    <scope>TISSUE SPECIFICITY</scope>
</reference>
<reference evidence="15" key="5">
    <citation type="journal article" date="1999" name="Cell">
        <title>Lateral signaling mediated by axon contact and calcium entry regulates asymmetric odorant receptor expression in C. elegans.</title>
        <authorList>
            <person name="Troemel E.R."/>
            <person name="Sagasti A."/>
            <person name="Bargmann C.I."/>
        </authorList>
    </citation>
    <scope>FUNCTION</scope>
</reference>
<reference evidence="15" key="6">
    <citation type="journal article" date="2010" name="Nat. Neurosci.">
        <title>C. elegans phototransduction requires a G protein-dependent cGMP pathway and a taste receptor homolog.</title>
        <authorList>
            <person name="Liu J."/>
            <person name="Ward A."/>
            <person name="Gao J."/>
            <person name="Dong Y."/>
            <person name="Nishio N."/>
            <person name="Inada H."/>
            <person name="Kang L."/>
            <person name="Yu Y."/>
            <person name="Ma D."/>
            <person name="Xu T."/>
            <person name="Mori I."/>
            <person name="Xie Z."/>
            <person name="Xu X.Z."/>
        </authorList>
    </citation>
    <scope>FUNCTION</scope>
</reference>
<reference key="7">
    <citation type="journal article" date="2013" name="PLoS Genet.">
        <title>The C. elegans cGMP-dependent protein kinase EGL-4 regulates nociceptive behavioral sensitivity.</title>
        <authorList>
            <person name="Krzyzanowski M.C."/>
            <person name="Brueggemann C."/>
            <person name="Ezak M.J."/>
            <person name="Wood J.F."/>
            <person name="Michaels K.L."/>
            <person name="Jackson C.A."/>
            <person name="Juang B.T."/>
            <person name="Collins K.D."/>
            <person name="Yu M.C."/>
            <person name="L'etoile N.D."/>
            <person name="Ferkey D.M."/>
        </authorList>
    </citation>
    <scope>FUNCTION</scope>
</reference>
<reference key="8">
    <citation type="journal article" date="2014" name="J. Neurosci.">
        <title>Dissecting the signaling mechanisms underlying recognition and preference of food odors.</title>
        <authorList>
            <person name="Harris G."/>
            <person name="Shen Y."/>
            <person name="Ha H."/>
            <person name="Donato A."/>
            <person name="Wallis S."/>
            <person name="Zhang X."/>
            <person name="Zhang Y."/>
        </authorList>
    </citation>
    <scope>FUNCTION</scope>
    <scope>DISRUPTION PHENOTYPE</scope>
</reference>
<reference key="9">
    <citation type="journal article" date="2019" name="Elife">
        <title>The Caenorhabditis elegans Tubby homolog dynamically modulates olfactory cilia membrane morphogenesis and phospholipid composition.</title>
        <authorList>
            <person name="DiTirro D."/>
            <person name="Philbrook A."/>
            <person name="Rubino K."/>
            <person name="Sengupta P."/>
        </authorList>
    </citation>
    <scope>FUNCTION</scope>
    <scope>DISRUPTION PHENOTYPE</scope>
</reference>
<proteinExistence type="evidence at protein level"/>
<accession>B1Q257</accession>
<accession>Q21617</accession>
<accession>Q9NGZ8</accession>
<feature type="signal peptide" evidence="2">
    <location>
        <begin position="1"/>
        <end position="20"/>
    </location>
</feature>
<feature type="chain" id="PRO_0000433279" description="Receptor-type guanylate cyclase gcy-10" evidence="2">
    <location>
        <begin position="21"/>
        <end position="1067"/>
    </location>
</feature>
<feature type="topological domain" description="Extracellular" evidence="2">
    <location>
        <begin position="21"/>
        <end position="438"/>
    </location>
</feature>
<feature type="transmembrane region" description="Helical" evidence="2">
    <location>
        <begin position="439"/>
        <end position="459"/>
    </location>
</feature>
<feature type="topological domain" description="Cytoplasmic" evidence="2">
    <location>
        <begin position="460"/>
        <end position="1067"/>
    </location>
</feature>
<feature type="domain" description="Protein kinase" evidence="4">
    <location>
        <begin position="509"/>
        <end position="791"/>
    </location>
</feature>
<feature type="domain" description="Guanylate cyclase" evidence="3">
    <location>
        <begin position="859"/>
        <end position="989"/>
    </location>
</feature>
<feature type="binding site" evidence="4">
    <location>
        <begin position="515"/>
        <end position="523"/>
    </location>
    <ligand>
        <name>ATP</name>
        <dbReference type="ChEBI" id="CHEBI:30616"/>
    </ligand>
</feature>
<feature type="binding site" evidence="4">
    <location>
        <position position="534"/>
    </location>
    <ligand>
        <name>ATP</name>
        <dbReference type="ChEBI" id="CHEBI:30616"/>
    </ligand>
</feature>
<feature type="glycosylation site" description="N-linked (GlcNAc...) asparagine" evidence="5">
    <location>
        <position position="411"/>
    </location>
</feature>
<feature type="splice variant" id="VSP_057702" description="In isoform a." evidence="15">
    <original>MLKSLLIIVIVFLHRELCDGIQLILFDNWPSAQNVCASAVADATANGQCTTKSIQ</original>
    <variation>MCVLRLWQMRRPMDSVQQSQYSE</variation>
    <location>
        <begin position="1"/>
        <end position="55"/>
    </location>
</feature>
<feature type="splice variant" id="VSP_057703" description="In isoform a." evidence="15">
    <original>EVNCYWLNEHLHEETEPPL</original>
    <variation>NAARLKICCETFETHSIDL</variation>
    <location>
        <begin position="1028"/>
        <end position="1046"/>
    </location>
</feature>
<feature type="splice variant" id="VSP_057704" description="In isoform a." evidence="15">
    <location>
        <begin position="1047"/>
        <end position="1067"/>
    </location>
</feature>
<feature type="mutagenesis site" description="In n1930; loss of chemotaxis to volatile odorants." evidence="12">
    <original>G</original>
    <variation>D</variation>
    <location>
        <position position="647"/>
    </location>
</feature>
<feature type="mutagenesis site" description="Probable loss of cyclase activity. Loss of chemotaxis to some volatile odorants." evidence="7">
    <original>E</original>
    <variation>A</variation>
    <location>
        <position position="904"/>
    </location>
</feature>
<feature type="sequence conflict" description="In Ref. 1; AAF68380." evidence="15" ref="1">
    <original>E</original>
    <variation>EE</variation>
    <location>
        <position position="177"/>
    </location>
</feature>
<feature type="sequence conflict" description="In Ref. 1; AAF68380." evidence="15" ref="1">
    <original>E</original>
    <variation>EV</variation>
    <location>
        <position position="202"/>
    </location>
</feature>
<feature type="sequence conflict" description="In Ref. 1; AAF68380." evidence="15" ref="1">
    <original>D</original>
    <variation>DE</variation>
    <location>
        <position position="316"/>
    </location>
</feature>
<feature type="sequence conflict" description="In Ref. 1; AAF68380." evidence="15" ref="1">
    <original>T</original>
    <variation>S</variation>
    <location>
        <position position="358"/>
    </location>
</feature>
<feature type="sequence conflict" description="In Ref. 1; AAF68380." evidence="15" ref="1">
    <original>T</original>
    <variation>S</variation>
    <location>
        <position position="735"/>
    </location>
</feature>
<dbReference type="EC" id="4.6.1.2" evidence="1"/>
<dbReference type="EMBL" id="AF235027">
    <property type="protein sequence ID" value="AAF68380.1"/>
    <property type="molecule type" value="mRNA"/>
</dbReference>
<dbReference type="EMBL" id="BX284606">
    <property type="protein sequence ID" value="CAA92186.2"/>
    <property type="molecule type" value="Genomic_DNA"/>
</dbReference>
<dbReference type="EMBL" id="BX284606">
    <property type="protein sequence ID" value="CAQ16150.2"/>
    <property type="molecule type" value="Genomic_DNA"/>
</dbReference>
<dbReference type="PIR" id="T23845">
    <property type="entry name" value="T23845"/>
</dbReference>
<dbReference type="RefSeq" id="NP_001123168.2">
    <property type="nucleotide sequence ID" value="NM_001129696.2"/>
</dbReference>
<dbReference type="RefSeq" id="NP_510266.3">
    <property type="nucleotide sequence ID" value="NM_077865.3"/>
</dbReference>
<dbReference type="SMR" id="B1Q257"/>
<dbReference type="FunCoup" id="B1Q257">
    <property type="interactions" value="151"/>
</dbReference>
<dbReference type="STRING" id="6239.R01E6.1b.1"/>
<dbReference type="GlyCosmos" id="B1Q257">
    <property type="glycosylation" value="1 site, No reported glycans"/>
</dbReference>
<dbReference type="PaxDb" id="6239-R01E6.1b"/>
<dbReference type="WormBase" id="R01E6.1a">
    <molecule id="B1Q257-2"/>
    <property type="protein sequence ID" value="CE27430"/>
    <property type="gene ID" value="WBGene00003848"/>
    <property type="gene designation" value="odr-1"/>
</dbReference>
<dbReference type="WormBase" id="R01E6.1b">
    <molecule id="B1Q257-1"/>
    <property type="protein sequence ID" value="CE44132"/>
    <property type="gene ID" value="WBGene00003848"/>
    <property type="gene designation" value="odr-1"/>
</dbReference>
<dbReference type="eggNOG" id="KOG1023">
    <property type="taxonomic scope" value="Eukaryota"/>
</dbReference>
<dbReference type="InParanoid" id="B1Q257"/>
<dbReference type="OMA" id="QMIRMSE"/>
<dbReference type="PhylomeDB" id="B1Q257"/>
<dbReference type="Reactome" id="R-CEL-2514859">
    <property type="pathway name" value="Inactivation, recovery and regulation of the phototransduction cascade"/>
</dbReference>
<dbReference type="PRO" id="PR:B1Q257"/>
<dbReference type="Proteomes" id="UP000001940">
    <property type="component" value="Chromosome X"/>
</dbReference>
<dbReference type="Bgee" id="WBGene00003848">
    <property type="expression patterns" value="Expressed in pharyngeal muscle cell (C elegans)"/>
</dbReference>
<dbReference type="GO" id="GO:0097730">
    <property type="term" value="C:non-motile cilium"/>
    <property type="evidence" value="ECO:0000314"/>
    <property type="project" value="WormBase"/>
</dbReference>
<dbReference type="GO" id="GO:0005886">
    <property type="term" value="C:plasma membrane"/>
    <property type="evidence" value="ECO:0000318"/>
    <property type="project" value="GO_Central"/>
</dbReference>
<dbReference type="GO" id="GO:0005524">
    <property type="term" value="F:ATP binding"/>
    <property type="evidence" value="ECO:0007669"/>
    <property type="project" value="UniProtKB-KW"/>
</dbReference>
<dbReference type="GO" id="GO:0005525">
    <property type="term" value="F:GTP binding"/>
    <property type="evidence" value="ECO:0007669"/>
    <property type="project" value="UniProtKB-KW"/>
</dbReference>
<dbReference type="GO" id="GO:0004383">
    <property type="term" value="F:guanylate cyclase activity"/>
    <property type="evidence" value="ECO:0000250"/>
    <property type="project" value="WormBase"/>
</dbReference>
<dbReference type="GO" id="GO:0001653">
    <property type="term" value="F:peptide receptor activity"/>
    <property type="evidence" value="ECO:0000318"/>
    <property type="project" value="GO_Central"/>
</dbReference>
<dbReference type="GO" id="GO:0004672">
    <property type="term" value="F:protein kinase activity"/>
    <property type="evidence" value="ECO:0007669"/>
    <property type="project" value="InterPro"/>
</dbReference>
<dbReference type="GO" id="GO:0006182">
    <property type="term" value="P:cGMP biosynthetic process"/>
    <property type="evidence" value="ECO:0000250"/>
    <property type="project" value="WormBase"/>
</dbReference>
<dbReference type="GO" id="GO:0007635">
    <property type="term" value="P:chemosensory behavior"/>
    <property type="evidence" value="ECO:0000315"/>
    <property type="project" value="UniProtKB"/>
</dbReference>
<dbReference type="GO" id="GO:0035556">
    <property type="term" value="P:intracellular signal transduction"/>
    <property type="evidence" value="ECO:0007669"/>
    <property type="project" value="InterPro"/>
</dbReference>
<dbReference type="GO" id="GO:0050919">
    <property type="term" value="P:negative chemotaxis"/>
    <property type="evidence" value="ECO:0000315"/>
    <property type="project" value="WormBase"/>
</dbReference>
<dbReference type="GO" id="GO:0040015">
    <property type="term" value="P:negative regulation of multicellular organism growth"/>
    <property type="evidence" value="ECO:0000316"/>
    <property type="project" value="UniProtKB"/>
</dbReference>
<dbReference type="GO" id="GO:0042048">
    <property type="term" value="P:olfactory behavior"/>
    <property type="evidence" value="ECO:0000315"/>
    <property type="project" value="UniProtKB"/>
</dbReference>
<dbReference type="GO" id="GO:0008355">
    <property type="term" value="P:olfactory learning"/>
    <property type="evidence" value="ECO:0000315"/>
    <property type="project" value="WormBase"/>
</dbReference>
<dbReference type="GO" id="GO:0007602">
    <property type="term" value="P:phototransduction"/>
    <property type="evidence" value="ECO:0000315"/>
    <property type="project" value="UniProtKB"/>
</dbReference>
<dbReference type="GO" id="GO:0050918">
    <property type="term" value="P:positive chemotaxis"/>
    <property type="evidence" value="ECO:0000315"/>
    <property type="project" value="WormBase"/>
</dbReference>
<dbReference type="GO" id="GO:0010628">
    <property type="term" value="P:positive regulation of gene expression"/>
    <property type="evidence" value="ECO:0000315"/>
    <property type="project" value="UniProtKB"/>
</dbReference>
<dbReference type="GO" id="GO:0097499">
    <property type="term" value="P:protein localization to non-motile cilium"/>
    <property type="evidence" value="ECO:0000315"/>
    <property type="project" value="UniProtKB"/>
</dbReference>
<dbReference type="GO" id="GO:0007168">
    <property type="term" value="P:receptor guanylyl cyclase signaling pathway"/>
    <property type="evidence" value="ECO:0000318"/>
    <property type="project" value="GO_Central"/>
</dbReference>
<dbReference type="GO" id="GO:0040014">
    <property type="term" value="P:regulation of multicellular organism growth"/>
    <property type="evidence" value="ECO:0000316"/>
    <property type="project" value="UniProtKB"/>
</dbReference>
<dbReference type="GO" id="GO:0050767">
    <property type="term" value="P:regulation of neurogenesis"/>
    <property type="evidence" value="ECO:0000315"/>
    <property type="project" value="UniProtKB"/>
</dbReference>
<dbReference type="GO" id="GO:1990834">
    <property type="term" value="P:response to odorant"/>
    <property type="evidence" value="ECO:0000315"/>
    <property type="project" value="UniProtKB"/>
</dbReference>
<dbReference type="GO" id="GO:0050913">
    <property type="term" value="P:sensory perception of bitter taste"/>
    <property type="evidence" value="ECO:0000315"/>
    <property type="project" value="UniProtKB"/>
</dbReference>
<dbReference type="GO" id="GO:0007608">
    <property type="term" value="P:sensory perception of smell"/>
    <property type="evidence" value="ECO:0007669"/>
    <property type="project" value="UniProtKB-KW"/>
</dbReference>
<dbReference type="CDD" id="cd07302">
    <property type="entry name" value="CHD"/>
    <property type="match status" value="1"/>
</dbReference>
<dbReference type="CDD" id="cd06352">
    <property type="entry name" value="PBP1_NPR_GC-like"/>
    <property type="match status" value="1"/>
</dbReference>
<dbReference type="CDD" id="cd13992">
    <property type="entry name" value="PK_GC"/>
    <property type="match status" value="1"/>
</dbReference>
<dbReference type="FunFam" id="1.10.510.10:FF:001285">
    <property type="entry name" value="Guanylate cyclase"/>
    <property type="match status" value="1"/>
</dbReference>
<dbReference type="FunFam" id="3.30.70.1230:FF:000050">
    <property type="entry name" value="Guanylate cyclase"/>
    <property type="match status" value="1"/>
</dbReference>
<dbReference type="Gene3D" id="3.30.70.1230">
    <property type="entry name" value="Nucleotide cyclase"/>
    <property type="match status" value="1"/>
</dbReference>
<dbReference type="Gene3D" id="1.10.510.10">
    <property type="entry name" value="Transferase(Phosphotransferase) domain 1"/>
    <property type="match status" value="1"/>
</dbReference>
<dbReference type="InterPro" id="IPR001054">
    <property type="entry name" value="A/G_cyclase"/>
</dbReference>
<dbReference type="InterPro" id="IPR050401">
    <property type="entry name" value="Cyclic_nucleotide_synthase"/>
</dbReference>
<dbReference type="InterPro" id="IPR011009">
    <property type="entry name" value="Kinase-like_dom_sf"/>
</dbReference>
<dbReference type="InterPro" id="IPR029787">
    <property type="entry name" value="Nucleotide_cyclase"/>
</dbReference>
<dbReference type="InterPro" id="IPR028082">
    <property type="entry name" value="Peripla_BP_I"/>
</dbReference>
<dbReference type="InterPro" id="IPR000719">
    <property type="entry name" value="Prot_kinase_dom"/>
</dbReference>
<dbReference type="PANTHER" id="PTHR11920">
    <property type="entry name" value="GUANYLYL CYCLASE"/>
    <property type="match status" value="1"/>
</dbReference>
<dbReference type="PANTHER" id="PTHR11920:SF355">
    <property type="entry name" value="RECEPTOR-TYPE GUANYLATE CYCLASE GCY-10-RELATED"/>
    <property type="match status" value="1"/>
</dbReference>
<dbReference type="Pfam" id="PF00211">
    <property type="entry name" value="Guanylate_cyc"/>
    <property type="match status" value="1"/>
</dbReference>
<dbReference type="Pfam" id="PF00069">
    <property type="entry name" value="Pkinase"/>
    <property type="match status" value="1"/>
</dbReference>
<dbReference type="SMART" id="SM00044">
    <property type="entry name" value="CYCc"/>
    <property type="match status" value="1"/>
</dbReference>
<dbReference type="SMART" id="SM00220">
    <property type="entry name" value="S_TKc"/>
    <property type="match status" value="1"/>
</dbReference>
<dbReference type="SUPFAM" id="SSF55073">
    <property type="entry name" value="Nucleotide cyclase"/>
    <property type="match status" value="1"/>
</dbReference>
<dbReference type="SUPFAM" id="SSF53822">
    <property type="entry name" value="Periplasmic binding protein-like I"/>
    <property type="match status" value="1"/>
</dbReference>
<dbReference type="SUPFAM" id="SSF56112">
    <property type="entry name" value="Protein kinase-like (PK-like)"/>
    <property type="match status" value="1"/>
</dbReference>
<dbReference type="PROSITE" id="PS50125">
    <property type="entry name" value="GUANYLATE_CYCLASE_2"/>
    <property type="match status" value="1"/>
</dbReference>
<dbReference type="PROSITE" id="PS50011">
    <property type="entry name" value="PROTEIN_KINASE_DOM"/>
    <property type="match status" value="1"/>
</dbReference>
<protein>
    <recommendedName>
        <fullName evidence="15">Receptor-type guanylate cyclase gcy-10</fullName>
        <ecNumber evidence="1">4.6.1.2</ecNumber>
    </recommendedName>
    <alternativeName>
        <fullName evidence="19">Odorant response abnormal protein 1</fullName>
    </alternativeName>
</protein>
<organism evidence="17">
    <name type="scientific">Caenorhabditis elegans</name>
    <dbReference type="NCBI Taxonomy" id="6239"/>
    <lineage>
        <taxon>Eukaryota</taxon>
        <taxon>Metazoa</taxon>
        <taxon>Ecdysozoa</taxon>
        <taxon>Nematoda</taxon>
        <taxon>Chromadorea</taxon>
        <taxon>Rhabditida</taxon>
        <taxon>Rhabditina</taxon>
        <taxon>Rhabditomorpha</taxon>
        <taxon>Rhabditoidea</taxon>
        <taxon>Rhabditidae</taxon>
        <taxon>Peloderinae</taxon>
        <taxon>Caenorhabditis</taxon>
    </lineage>
</organism>
<comment type="function">
    <text evidence="1 6 7 8 9 10 11 12">Guanylate cyclase involved in the production of the second messenger cGMP (By similarity). Regulates chemotaxis responses toward volatile odorants in AWC sensory neurons and their avoidance in AWB sensory neurons (PubMed:10774726, PubMed:8348618). May be involved in sensitivity to quinine by regulating egl-4 activity through the production of cGMP (PubMed:23874221). Involved in phototransduction in ASJ neurons downstream of G protein coupled-photoreceptor lite-1 (PubMed:20436480). Required to maintain the expression of putative olfactory receptor str-2 in AWC neurons in adults (PubMed:10571181). In AWB and AWC sensory neurons, mediates the recognition of food oders which subsequently allows for the detection of preferred food sources (PubMed:25009271). Involved in AWB sensory neuron development and extension during postembryonic development, potentially via mediating localization of tub-1 and PI(4,5)P2 to membrane cilia (PubMed:31259686).</text>
</comment>
<comment type="catalytic activity">
    <reaction evidence="1">
        <text>GTP = 3',5'-cyclic GMP + diphosphate</text>
        <dbReference type="Rhea" id="RHEA:13665"/>
        <dbReference type="ChEBI" id="CHEBI:33019"/>
        <dbReference type="ChEBI" id="CHEBI:37565"/>
        <dbReference type="ChEBI" id="CHEBI:57746"/>
        <dbReference type="EC" id="4.6.1.2"/>
    </reaction>
</comment>
<comment type="subcellular location">
    <subcellularLocation>
        <location evidence="15">Cell membrane</location>
        <topology evidence="15">Single-pass type I membrane protein</topology>
    </subcellularLocation>
    <subcellularLocation>
        <location evidence="7">Cell projection</location>
        <location evidence="7">Cilium</location>
    </subcellularLocation>
    <text evidence="7">Localizes in cilium of sensory neurons.</text>
</comment>
<comment type="alternative products">
    <event type="alternative splicing"/>
    <isoform>
        <id>B1Q257-1</id>
        <name evidence="19">b</name>
        <sequence type="displayed"/>
    </isoform>
    <isoform>
        <id>B1Q257-2</id>
        <name evidence="18">a</name>
        <sequence type="described" ref="VSP_057702 VSP_057703 VSP_057704"/>
    </isoform>
</comment>
<comment type="tissue specificity">
    <text evidence="7 13">Expressed predominantly in AWC but also in AWB, ASI, ASJ and ASK sensory neurons and in I1 interneuron.</text>
</comment>
<comment type="domain">
    <text evidence="14">The extracellular domain may not be directly implicated in the detection of volatile odorants.</text>
</comment>
<comment type="domain">
    <text evidence="4">The protein kinase domain is predicted to be catalytically inactive.</text>
</comment>
<comment type="disruption phenotype">
    <text evidence="10 11">AWB sensory neurons show an expanded fan phenotype caused by membrane expansion. Increase in trafficking and localization of tub-1 to AWB neuron cilia (PubMed:31259686). Increase in PPK-1 and PI(4,5)P2 at the AWB cilia membrane (PubMed:31259686). RNAi-mediated knockdown in AWB and AWC sensory neurons results in a defective preference between different food odors.</text>
</comment>
<comment type="similarity">
    <text evidence="3">Belongs to the adenylyl cyclase class-4/guanylyl cyclase family.</text>
</comment>
<name>GCY10_CAEEL</name>
<gene>
    <name evidence="19" type="primary">odr-1</name>
    <name evidence="19" type="synonym">gcy-10</name>
    <name evidence="19" type="ORF">R01E6.1</name>
</gene>
<keyword id="KW-0025">Alternative splicing</keyword>
<keyword id="KW-0067">ATP-binding</keyword>
<keyword id="KW-1003">Cell membrane</keyword>
<keyword id="KW-0966">Cell projection</keyword>
<keyword id="KW-0141">cGMP biosynthesis</keyword>
<keyword id="KW-0145">Chemotaxis</keyword>
<keyword id="KW-0325">Glycoprotein</keyword>
<keyword id="KW-0342">GTP-binding</keyword>
<keyword id="KW-0456">Lyase</keyword>
<keyword id="KW-0472">Membrane</keyword>
<keyword id="KW-0547">Nucleotide-binding</keyword>
<keyword id="KW-0552">Olfaction</keyword>
<keyword id="KW-0675">Receptor</keyword>
<keyword id="KW-1185">Reference proteome</keyword>
<keyword id="KW-0716">Sensory transduction</keyword>
<keyword id="KW-0732">Signal</keyword>
<keyword id="KW-0812">Transmembrane</keyword>
<keyword id="KW-1133">Transmembrane helix</keyword>
<evidence type="ECO:0000250" key="1">
    <source>
        <dbReference type="UniProtKB" id="Q19187"/>
    </source>
</evidence>
<evidence type="ECO:0000255" key="2"/>
<evidence type="ECO:0000255" key="3">
    <source>
        <dbReference type="PROSITE-ProRule" id="PRU00099"/>
    </source>
</evidence>
<evidence type="ECO:0000255" key="4">
    <source>
        <dbReference type="PROSITE-ProRule" id="PRU00159"/>
    </source>
</evidence>
<evidence type="ECO:0000255" key="5">
    <source>
        <dbReference type="PROSITE-ProRule" id="PRU00498"/>
    </source>
</evidence>
<evidence type="ECO:0000269" key="6">
    <source>
    </source>
</evidence>
<evidence type="ECO:0000269" key="7">
    <source>
    </source>
</evidence>
<evidence type="ECO:0000269" key="8">
    <source>
    </source>
</evidence>
<evidence type="ECO:0000269" key="9">
    <source>
    </source>
</evidence>
<evidence type="ECO:0000269" key="10">
    <source>
    </source>
</evidence>
<evidence type="ECO:0000269" key="11">
    <source>
    </source>
</evidence>
<evidence type="ECO:0000269" key="12">
    <source>
    </source>
</evidence>
<evidence type="ECO:0000269" key="13">
    <source>
    </source>
</evidence>
<evidence type="ECO:0000303" key="14">
    <source>
    </source>
</evidence>
<evidence type="ECO:0000305" key="15"/>
<evidence type="ECO:0000312" key="16">
    <source>
        <dbReference type="EMBL" id="AAF68380.1"/>
    </source>
</evidence>
<evidence type="ECO:0000312" key="17">
    <source>
        <dbReference type="Proteomes" id="UP000001940"/>
    </source>
</evidence>
<evidence type="ECO:0000312" key="18">
    <source>
        <dbReference type="WormBase" id="R01E6.1a"/>
    </source>
</evidence>
<evidence type="ECO:0000312" key="19">
    <source>
        <dbReference type="WormBase" id="R01E6.1b"/>
    </source>
</evidence>
<sequence>MLKSLLIIVIVFLHRELCDGIQLILFDNWPSAQNVCASAVADATANGQCTTKSIQKHLELLTVIILLKLFGVFHRINQQHGCSGDNSVKSASYAINAVASRTSGELDFVFVGPTCTTDIRTIGDFAEIWKSPVIGYEPVFEARGVQELTSVINVAQFSVGGVAETLVFLMKELEQVEITLVGSVKVLPNGLSLSNDLRSYNEIMNSFKIREYVEVDENDVDWTKVDQKIKRGARMIVVCADFYDIYSAFYNIGIRSLSGFRFIIVVILNKPPDEILNQPNVKNLLYGSNAFIISPLQEQYSDAFSIMQDVIPNLADDQFTTFLRIYHACYAYCVGSVNGAETQTDNYHTAMSGKAVTTKYGTFTFDNSGSVLTNYAVFTINPAEMTFESILTLKSVAKSCDTYNCFQLSPNKTSDLLWTLKDMDPPDDCVAKSSCVNYIPHIIAAVVIVTIIVIAIVIIVKQRRHKLNIYKLTWKVPKESLKIIVNKNADAKMQRELENRASNTDNAAALTSRRRVFGSYALVGTQRAEYVQFKQIRKINFPETTLDYLYSLKQLQHDNLAKFYGIQVNDDIMTMTILHTLVERGTLEEFCLDRDFGMDDTFKSAFMRDILKGLQYLHKSSIGYHGHLQASTCLIDINWVLKLTLYGVSNFMSDQLDAENIKVPEQAAHMITYPQYVCFPPEHIREYDDSGKQPPRVVRGSPKGDIYCVGMIFYMMVEREDPYHLIHSVERPNATLIKQILNENHMPRITDDYRQENMLLEMCKECWDRNPDKRPTIKKLIESISTVYPLSKGNLVDQMIRMSEKYADELEQMVAIRTADLADAQMQTMRLLNEMLPASIAKDLKNGLIMPPRSYESATVMFVQICDFNALMKRSSPEQVIAFLNDIYDQFDTVIKRHDAYKVETTGETYMVASGVPHENEGRHIFEVAEISLEIREISYIYVLQHDKNYKLRIRIGFHAGPIAAGVIGIRSPRYCLFGDTVNFASRMQSNCPPNQIQTSEITARLLFDSHEYKFVKRGIVHVKGKGEVNCYWLNEHLHEETEPPLPPMTPVPNPLRRGSIVPLQKA</sequence>